<organism>
    <name type="scientific">Homo sapiens</name>
    <name type="common">Human</name>
    <dbReference type="NCBI Taxonomy" id="9606"/>
    <lineage>
        <taxon>Eukaryota</taxon>
        <taxon>Metazoa</taxon>
        <taxon>Chordata</taxon>
        <taxon>Craniata</taxon>
        <taxon>Vertebrata</taxon>
        <taxon>Euteleostomi</taxon>
        <taxon>Mammalia</taxon>
        <taxon>Eutheria</taxon>
        <taxon>Euarchontoglires</taxon>
        <taxon>Primates</taxon>
        <taxon>Haplorrhini</taxon>
        <taxon>Catarrhini</taxon>
        <taxon>Hominidae</taxon>
        <taxon>Homo</taxon>
    </lineage>
</organism>
<feature type="chain" id="PRO_0000070215" description="Vomeronasal type-1 receptor 3">
    <location>
        <begin position="1"/>
        <end position="311"/>
    </location>
</feature>
<feature type="topological domain" description="Extracellular" evidence="1">
    <location>
        <begin position="1"/>
        <end position="5"/>
    </location>
</feature>
<feature type="transmembrane region" description="Helical; Name=1" evidence="1">
    <location>
        <begin position="6"/>
        <end position="26"/>
    </location>
</feature>
<feature type="topological domain" description="Cytoplasmic" evidence="1">
    <location>
        <begin position="27"/>
        <end position="51"/>
    </location>
</feature>
<feature type="transmembrane region" description="Helical; Name=2" evidence="1">
    <location>
        <begin position="52"/>
        <end position="72"/>
    </location>
</feature>
<feature type="topological domain" description="Extracellular" evidence="1">
    <location>
        <begin position="73"/>
        <end position="92"/>
    </location>
</feature>
<feature type="transmembrane region" description="Helical; Name=3" evidence="1">
    <location>
        <begin position="93"/>
        <end position="113"/>
    </location>
</feature>
<feature type="topological domain" description="Cytoplasmic" evidence="1">
    <location>
        <begin position="114"/>
        <end position="130"/>
    </location>
</feature>
<feature type="transmembrane region" description="Helical; Name=4" evidence="1">
    <location>
        <begin position="131"/>
        <end position="151"/>
    </location>
</feature>
<feature type="topological domain" description="Extracellular" evidence="1">
    <location>
        <begin position="152"/>
        <end position="187"/>
    </location>
</feature>
<feature type="transmembrane region" description="Helical; Name=5" evidence="1">
    <location>
        <begin position="188"/>
        <end position="208"/>
    </location>
</feature>
<feature type="topological domain" description="Cytoplasmic" evidence="1">
    <location>
        <begin position="209"/>
        <end position="232"/>
    </location>
</feature>
<feature type="transmembrane region" description="Helical; Name=6" evidence="1">
    <location>
        <begin position="233"/>
        <end position="249"/>
    </location>
</feature>
<feature type="topological domain" description="Extracellular" evidence="1">
    <location>
        <begin position="250"/>
        <end position="264"/>
    </location>
</feature>
<feature type="transmembrane region" description="Helical; Name=7" evidence="1">
    <location>
        <begin position="265"/>
        <end position="285"/>
    </location>
</feature>
<feature type="topological domain" description="Cytoplasmic" evidence="1">
    <location>
        <begin position="286"/>
        <end position="311"/>
    </location>
</feature>
<feature type="glycosylation site" description="N-linked (GlcNAc...) asparagine" evidence="1">
    <location>
        <position position="159"/>
    </location>
</feature>
<evidence type="ECO:0000255" key="1"/>
<evidence type="ECO:0000255" key="2">
    <source>
        <dbReference type="PROSITE-ProRule" id="PRU00521"/>
    </source>
</evidence>
<evidence type="ECO:0000305" key="3">
    <source>
    </source>
</evidence>
<dbReference type="EMBL" id="AF336873">
    <property type="protein sequence ID" value="AAK21299.1"/>
    <property type="molecule type" value="mRNA"/>
</dbReference>
<dbReference type="RefSeq" id="NP_778145.2">
    <property type="nucleotide sequence ID" value="NM_174980.2"/>
</dbReference>
<dbReference type="SMR" id="Q9BXE9"/>
<dbReference type="GlyCosmos" id="Q9BXE9">
    <property type="glycosylation" value="1 site, No reported glycans"/>
</dbReference>
<dbReference type="GlyGen" id="Q9BXE9">
    <property type="glycosylation" value="1 site"/>
</dbReference>
<dbReference type="BioMuta" id="HGNC:19867"/>
<dbReference type="DMDM" id="68566227"/>
<dbReference type="jPOST" id="Q9BXE9"/>
<dbReference type="PeptideAtlas" id="Q9BXE9"/>
<dbReference type="DNASU" id="317702"/>
<dbReference type="GeneID" id="317702"/>
<dbReference type="KEGG" id="hsa:317702"/>
<dbReference type="AGR" id="HGNC:19867"/>
<dbReference type="CTD" id="317702"/>
<dbReference type="GeneCards" id="VN1R3"/>
<dbReference type="HGNC" id="HGNC:19867">
    <property type="gene designation" value="VN1R3"/>
</dbReference>
<dbReference type="neXtProt" id="NX_Q9BXE9"/>
<dbReference type="InParanoid" id="Q9BXE9"/>
<dbReference type="PAN-GO" id="Q9BXE9">
    <property type="GO annotations" value="0 GO annotations based on evolutionary models"/>
</dbReference>
<dbReference type="PhylomeDB" id="Q9BXE9"/>
<dbReference type="PathwayCommons" id="Q9BXE9"/>
<dbReference type="BioGRID-ORCS" id="317702">
    <property type="hits" value="0 hits in 1 CRISPR screen"/>
</dbReference>
<dbReference type="GenomeRNAi" id="317702"/>
<dbReference type="Pharos" id="Q9BXE9">
    <property type="development level" value="Tdark"/>
</dbReference>
<dbReference type="PRO" id="PR:Q9BXE9"/>
<dbReference type="Proteomes" id="UP000005640">
    <property type="component" value="Unplaced"/>
</dbReference>
<dbReference type="RNAct" id="Q9BXE9">
    <property type="molecule type" value="protein"/>
</dbReference>
<dbReference type="GO" id="GO:0005886">
    <property type="term" value="C:plasma membrane"/>
    <property type="evidence" value="ECO:0007669"/>
    <property type="project" value="UniProtKB-SubCell"/>
</dbReference>
<dbReference type="GO" id="GO:0016503">
    <property type="term" value="F:pheromone receptor activity"/>
    <property type="evidence" value="ECO:0007669"/>
    <property type="project" value="InterPro"/>
</dbReference>
<dbReference type="GO" id="GO:0019236">
    <property type="term" value="P:response to pheromone"/>
    <property type="evidence" value="ECO:0007669"/>
    <property type="project" value="UniProtKB-KW"/>
</dbReference>
<dbReference type="GO" id="GO:0007606">
    <property type="term" value="P:sensory perception of chemical stimulus"/>
    <property type="evidence" value="ECO:0007669"/>
    <property type="project" value="UniProtKB-ARBA"/>
</dbReference>
<dbReference type="CDD" id="cd13949">
    <property type="entry name" value="7tm_V1R_pheromone"/>
    <property type="match status" value="1"/>
</dbReference>
<dbReference type="FunFam" id="1.20.1070.10:FF:000033">
    <property type="entry name" value="Vomeronasal type-1 receptor"/>
    <property type="match status" value="1"/>
</dbReference>
<dbReference type="Gene3D" id="1.20.1070.10">
    <property type="entry name" value="Rhodopsin 7-helix transmembrane proteins"/>
    <property type="match status" value="1"/>
</dbReference>
<dbReference type="InterPro" id="IPR017452">
    <property type="entry name" value="GPCR_Rhodpsn_7TM"/>
</dbReference>
<dbReference type="InterPro" id="IPR004072">
    <property type="entry name" value="Vmron_rcpt_1"/>
</dbReference>
<dbReference type="PANTHER" id="PTHR24062">
    <property type="entry name" value="VOMERONASAL TYPE-1 RECEPTOR"/>
    <property type="match status" value="1"/>
</dbReference>
<dbReference type="Pfam" id="PF03402">
    <property type="entry name" value="V1R"/>
    <property type="match status" value="1"/>
</dbReference>
<dbReference type="PRINTS" id="PR01534">
    <property type="entry name" value="VOMERONASL1R"/>
</dbReference>
<dbReference type="SUPFAM" id="SSF81321">
    <property type="entry name" value="Family A G protein-coupled receptor-like"/>
    <property type="match status" value="1"/>
</dbReference>
<dbReference type="PROSITE" id="PS50262">
    <property type="entry name" value="G_PROTEIN_RECEP_F1_2"/>
    <property type="match status" value="1"/>
</dbReference>
<comment type="function">
    <text>Putative pheromone receptor.</text>
</comment>
<comment type="subcellular location">
    <subcellularLocation>
        <location>Cell membrane</location>
        <topology>Multi-pass membrane protein</topology>
    </subcellularLocation>
</comment>
<comment type="polymorphism">
    <text evidence="3">There seems to be a deletion in the gene coding for this protein in about 98% of the population.</text>
</comment>
<comment type="miscellaneous">
    <text>The gorilla and orangutan orthologous proteins do not exist, their genes are pseudogenes.</text>
</comment>
<comment type="similarity">
    <text evidence="2">Belongs to the G-protein coupled receptor 1 family.</text>
</comment>
<comment type="online information" name="Protein Spotlight">
    <link uri="https://www.proteinspotlight.org/back_issues/061"/>
    <text>No one nose - Issue 61 of August 2005</text>
</comment>
<gene>
    <name type="primary">VN1R3</name>
    <name type="synonym">V1RL3</name>
    <name type="ORF">FKSG46</name>
</gene>
<accession>Q9BXE9</accession>
<name>VN1R3_HUMAN</name>
<keyword id="KW-1003">Cell membrane</keyword>
<keyword id="KW-0297">G-protein coupled receptor</keyword>
<keyword id="KW-0325">Glycoprotein</keyword>
<keyword id="KW-0472">Membrane</keyword>
<keyword id="KW-0589">Pheromone response</keyword>
<keyword id="KW-0675">Receptor</keyword>
<keyword id="KW-1185">Reference proteome</keyword>
<keyword id="KW-0807">Transducer</keyword>
<keyword id="KW-0812">Transmembrane</keyword>
<keyword id="KW-1133">Transmembrane helix</keyword>
<reference key="1">
    <citation type="submission" date="2001-01" db="EMBL/GenBank/DDBJ databases">
        <title>Cloning and characterization of FKSG46, a novel gene located on human chromosome 16.</title>
        <authorList>
            <person name="Wang Y.-G."/>
            <person name="Gong L."/>
        </authorList>
    </citation>
    <scope>NUCLEOTIDE SEQUENCE [MRNA]</scope>
</reference>
<reference key="2">
    <citation type="journal article" date="2002" name="Curr. Biol.">
        <title>Novel human vomeronasal receptor-like genes reveal species-specific families.</title>
        <authorList>
            <person name="Rodriguez I."/>
            <person name="Mombaerts P."/>
        </authorList>
    </citation>
    <scope>NUCLEOTIDE SEQUENCE [GENOMIC DNA]</scope>
</reference>
<reference key="3">
    <citation type="journal article" date="2003" name="Proc. Natl. Acad. Sci. U.S.A.">
        <title>Evolutionary deterioration of the vomeronasal pheromone transduction pathway in catarrhine primates.</title>
        <authorList>
            <person name="Zhang J."/>
            <person name="Webb D.M."/>
        </authorList>
    </citation>
    <scope>DISCUSSION OF POLYMORPHISM</scope>
</reference>
<proteinExistence type="evidence at transcript level"/>
<sequence>MASKDFAIGMILLSQIMVGFLGNFFLLYHYSFLCFTRGMLQSTDLILKHLTIANSLVILSKGIPQTMAAFGLKDSLSDIGCKFVFYVHRVGRAVCVGNACLLSVFQVITISPSEFRWAELKLHAHKYIRSFILVLCWILNTLVNITVLLHVTGKWNSINSTKTNDYGYCSGGSRSRIPHSLHIVLLSSLDVLCLGLMTLASGSMVFILHRHKQQVQHIHGTNLSARSSPESRVTQSILVLVSTLCYFTRSPPSLHMSLFPNPSWWLLNTSALITACFPMVSPFVLMSRHPRIPRLGSACCGRNPQFPKLVR</sequence>
<protein>
    <recommendedName>
        <fullName>Vomeronasal type-1 receptor 3</fullName>
    </recommendedName>
    <alternativeName>
        <fullName>V1r-like receptor 3</fullName>
    </alternativeName>
</protein>